<feature type="chain" id="PRO_1000077163" description="ATP-dependent Clp protease ATP-binding subunit ClpX">
    <location>
        <begin position="1"/>
        <end position="444"/>
    </location>
</feature>
<feature type="domain" description="ClpX-type ZB" evidence="2">
    <location>
        <begin position="1"/>
        <end position="51"/>
    </location>
</feature>
<feature type="region of interest" description="Disordered" evidence="3">
    <location>
        <begin position="50"/>
        <end position="73"/>
    </location>
</feature>
<feature type="binding site" evidence="2">
    <location>
        <position position="10"/>
    </location>
    <ligand>
        <name>Zn(2+)</name>
        <dbReference type="ChEBI" id="CHEBI:29105"/>
    </ligand>
</feature>
<feature type="binding site" evidence="2">
    <location>
        <position position="13"/>
    </location>
    <ligand>
        <name>Zn(2+)</name>
        <dbReference type="ChEBI" id="CHEBI:29105"/>
    </ligand>
</feature>
<feature type="binding site" evidence="2">
    <location>
        <position position="32"/>
    </location>
    <ligand>
        <name>Zn(2+)</name>
        <dbReference type="ChEBI" id="CHEBI:29105"/>
    </ligand>
</feature>
<feature type="binding site" evidence="2">
    <location>
        <position position="35"/>
    </location>
    <ligand>
        <name>Zn(2+)</name>
        <dbReference type="ChEBI" id="CHEBI:29105"/>
    </ligand>
</feature>
<feature type="binding site" evidence="1">
    <location>
        <begin position="140"/>
        <end position="147"/>
    </location>
    <ligand>
        <name>ATP</name>
        <dbReference type="ChEBI" id="CHEBI:30616"/>
    </ligand>
</feature>
<proteinExistence type="inferred from homology"/>
<comment type="function">
    <text evidence="1">ATP-dependent specificity component of the Clp protease. It directs the protease to specific substrates. Can perform chaperone functions in the absence of ClpP.</text>
</comment>
<comment type="subunit">
    <text evidence="1">Component of the ClpX-ClpP complex. Forms a hexameric ring that, in the presence of ATP, binds to fourteen ClpP subunits assembled into a disk-like structure with a central cavity, resembling the structure of eukaryotic proteasomes.</text>
</comment>
<comment type="similarity">
    <text evidence="1">Belongs to the ClpX chaperone family.</text>
</comment>
<protein>
    <recommendedName>
        <fullName evidence="1">ATP-dependent Clp protease ATP-binding subunit ClpX</fullName>
    </recommendedName>
</protein>
<gene>
    <name evidence="1" type="primary">clpX</name>
    <name type="ordered locus">MAE_62730</name>
</gene>
<evidence type="ECO:0000255" key="1">
    <source>
        <dbReference type="HAMAP-Rule" id="MF_00175"/>
    </source>
</evidence>
<evidence type="ECO:0000255" key="2">
    <source>
        <dbReference type="PROSITE-ProRule" id="PRU01250"/>
    </source>
</evidence>
<evidence type="ECO:0000256" key="3">
    <source>
        <dbReference type="SAM" id="MobiDB-lite"/>
    </source>
</evidence>
<sequence length="444" mass="49076">MSKYDSHLKCSFCGKSQEQVRKLIAGPGVYICDECVELCNEILDEELMEPPSPVAPVEERPNKRRSGQNKTTWEQIPKPREIKKHLDDYVIGQNEAKKVLSVAVYNHYKRLKDIQTQKAGGGSPEDSIELQKSNILLIGPTGSGKTLLAQTLAKILDVPFAVADATTLTEAGYVGEDVENILLRLLQVADLDVEEAQRGIIYIDEIDKIARKSENTSITRDVSGEGVQQALLKMLEGTIANVPPQGGRKHPYQDCIQIDTSNILFICGGAFVGLDKVIDQRLGKKSMGFIQPGDGQASKDKVAAGLLKQMTPDDLVKFGMIPEFVGRIPILAALSPLDEEALIAILTQPRNALVKQYQKLLKMDNVQLEFKSDAVLAIAQEAYRRKTGARALRGIVEELMLDVMYELPSRKDVKRCLITREMVEKRSTAELLVHPSSLPSQESA</sequence>
<dbReference type="EMBL" id="AP009552">
    <property type="protein sequence ID" value="BAG06095.1"/>
    <property type="molecule type" value="Genomic_DNA"/>
</dbReference>
<dbReference type="RefSeq" id="WP_012268371.1">
    <property type="nucleotide sequence ID" value="NC_010296.1"/>
</dbReference>
<dbReference type="SMR" id="B0JL96"/>
<dbReference type="STRING" id="449447.MAE_62730"/>
<dbReference type="PaxDb" id="449447-MAE_62730"/>
<dbReference type="EnsemblBacteria" id="BAG06095">
    <property type="protein sequence ID" value="BAG06095"/>
    <property type="gene ID" value="MAE_62730"/>
</dbReference>
<dbReference type="KEGG" id="mar:MAE_62730"/>
<dbReference type="PATRIC" id="fig|449447.4.peg.5747"/>
<dbReference type="eggNOG" id="COG1219">
    <property type="taxonomic scope" value="Bacteria"/>
</dbReference>
<dbReference type="HOGENOM" id="CLU_014218_8_2_3"/>
<dbReference type="BioCyc" id="MAER449447:MAE_RS27420-MONOMER"/>
<dbReference type="Proteomes" id="UP000001510">
    <property type="component" value="Chromosome"/>
</dbReference>
<dbReference type="GO" id="GO:0009376">
    <property type="term" value="C:HslUV protease complex"/>
    <property type="evidence" value="ECO:0007669"/>
    <property type="project" value="TreeGrafter"/>
</dbReference>
<dbReference type="GO" id="GO:0005524">
    <property type="term" value="F:ATP binding"/>
    <property type="evidence" value="ECO:0007669"/>
    <property type="project" value="UniProtKB-UniRule"/>
</dbReference>
<dbReference type="GO" id="GO:0016887">
    <property type="term" value="F:ATP hydrolysis activity"/>
    <property type="evidence" value="ECO:0007669"/>
    <property type="project" value="InterPro"/>
</dbReference>
<dbReference type="GO" id="GO:0140662">
    <property type="term" value="F:ATP-dependent protein folding chaperone"/>
    <property type="evidence" value="ECO:0007669"/>
    <property type="project" value="InterPro"/>
</dbReference>
<dbReference type="GO" id="GO:0046983">
    <property type="term" value="F:protein dimerization activity"/>
    <property type="evidence" value="ECO:0007669"/>
    <property type="project" value="InterPro"/>
</dbReference>
<dbReference type="GO" id="GO:0051082">
    <property type="term" value="F:unfolded protein binding"/>
    <property type="evidence" value="ECO:0007669"/>
    <property type="project" value="UniProtKB-UniRule"/>
</dbReference>
<dbReference type="GO" id="GO:0008270">
    <property type="term" value="F:zinc ion binding"/>
    <property type="evidence" value="ECO:0007669"/>
    <property type="project" value="InterPro"/>
</dbReference>
<dbReference type="GO" id="GO:0051301">
    <property type="term" value="P:cell division"/>
    <property type="evidence" value="ECO:0007669"/>
    <property type="project" value="TreeGrafter"/>
</dbReference>
<dbReference type="GO" id="GO:0051603">
    <property type="term" value="P:proteolysis involved in protein catabolic process"/>
    <property type="evidence" value="ECO:0007669"/>
    <property type="project" value="TreeGrafter"/>
</dbReference>
<dbReference type="CDD" id="cd19497">
    <property type="entry name" value="RecA-like_ClpX"/>
    <property type="match status" value="1"/>
</dbReference>
<dbReference type="FunFam" id="1.10.8.60:FF:000002">
    <property type="entry name" value="ATP-dependent Clp protease ATP-binding subunit ClpX"/>
    <property type="match status" value="1"/>
</dbReference>
<dbReference type="FunFam" id="3.40.50.300:FF:000005">
    <property type="entry name" value="ATP-dependent Clp protease ATP-binding subunit ClpX"/>
    <property type="match status" value="1"/>
</dbReference>
<dbReference type="Gene3D" id="1.10.8.60">
    <property type="match status" value="1"/>
</dbReference>
<dbReference type="Gene3D" id="6.20.220.10">
    <property type="entry name" value="ClpX chaperone, C4-type zinc finger domain"/>
    <property type="match status" value="1"/>
</dbReference>
<dbReference type="Gene3D" id="3.40.50.300">
    <property type="entry name" value="P-loop containing nucleotide triphosphate hydrolases"/>
    <property type="match status" value="1"/>
</dbReference>
<dbReference type="HAMAP" id="MF_00175">
    <property type="entry name" value="ClpX"/>
    <property type="match status" value="1"/>
</dbReference>
<dbReference type="InterPro" id="IPR003593">
    <property type="entry name" value="AAA+_ATPase"/>
</dbReference>
<dbReference type="InterPro" id="IPR050052">
    <property type="entry name" value="ATP-dep_Clp_protease_ClpX"/>
</dbReference>
<dbReference type="InterPro" id="IPR003959">
    <property type="entry name" value="ATPase_AAA_core"/>
</dbReference>
<dbReference type="InterPro" id="IPR019489">
    <property type="entry name" value="Clp_ATPase_C"/>
</dbReference>
<dbReference type="InterPro" id="IPR004487">
    <property type="entry name" value="Clp_protease_ATP-bd_su_ClpX"/>
</dbReference>
<dbReference type="InterPro" id="IPR046425">
    <property type="entry name" value="ClpX_bact"/>
</dbReference>
<dbReference type="InterPro" id="IPR027417">
    <property type="entry name" value="P-loop_NTPase"/>
</dbReference>
<dbReference type="InterPro" id="IPR010603">
    <property type="entry name" value="Znf_CppX_C4"/>
</dbReference>
<dbReference type="InterPro" id="IPR038366">
    <property type="entry name" value="Znf_CppX_C4_sf"/>
</dbReference>
<dbReference type="NCBIfam" id="TIGR00382">
    <property type="entry name" value="clpX"/>
    <property type="match status" value="1"/>
</dbReference>
<dbReference type="NCBIfam" id="NF003745">
    <property type="entry name" value="PRK05342.1"/>
    <property type="match status" value="1"/>
</dbReference>
<dbReference type="PANTHER" id="PTHR48102:SF7">
    <property type="entry name" value="ATP-DEPENDENT CLP PROTEASE ATP-BINDING SUBUNIT CLPX-LIKE, MITOCHONDRIAL"/>
    <property type="match status" value="1"/>
</dbReference>
<dbReference type="PANTHER" id="PTHR48102">
    <property type="entry name" value="ATP-DEPENDENT CLP PROTEASE ATP-BINDING SUBUNIT CLPX-LIKE, MITOCHONDRIAL-RELATED"/>
    <property type="match status" value="1"/>
</dbReference>
<dbReference type="Pfam" id="PF07724">
    <property type="entry name" value="AAA_2"/>
    <property type="match status" value="1"/>
</dbReference>
<dbReference type="Pfam" id="PF10431">
    <property type="entry name" value="ClpB_D2-small"/>
    <property type="match status" value="1"/>
</dbReference>
<dbReference type="Pfam" id="PF06689">
    <property type="entry name" value="zf-C4_ClpX"/>
    <property type="match status" value="1"/>
</dbReference>
<dbReference type="SMART" id="SM00382">
    <property type="entry name" value="AAA"/>
    <property type="match status" value="1"/>
</dbReference>
<dbReference type="SMART" id="SM01086">
    <property type="entry name" value="ClpB_D2-small"/>
    <property type="match status" value="1"/>
</dbReference>
<dbReference type="SMART" id="SM00994">
    <property type="entry name" value="zf-C4_ClpX"/>
    <property type="match status" value="1"/>
</dbReference>
<dbReference type="SUPFAM" id="SSF57716">
    <property type="entry name" value="Glucocorticoid receptor-like (DNA-binding domain)"/>
    <property type="match status" value="1"/>
</dbReference>
<dbReference type="SUPFAM" id="SSF52540">
    <property type="entry name" value="P-loop containing nucleoside triphosphate hydrolases"/>
    <property type="match status" value="1"/>
</dbReference>
<dbReference type="PROSITE" id="PS51902">
    <property type="entry name" value="CLPX_ZB"/>
    <property type="match status" value="1"/>
</dbReference>
<accession>B0JL96</accession>
<name>CLPX_MICAN</name>
<keyword id="KW-0067">ATP-binding</keyword>
<keyword id="KW-0143">Chaperone</keyword>
<keyword id="KW-0479">Metal-binding</keyword>
<keyword id="KW-0547">Nucleotide-binding</keyword>
<keyword id="KW-0862">Zinc</keyword>
<reference key="1">
    <citation type="journal article" date="2007" name="DNA Res.">
        <title>Complete genomic structure of the bloom-forming toxic cyanobacterium Microcystis aeruginosa NIES-843.</title>
        <authorList>
            <person name="Kaneko T."/>
            <person name="Nakajima N."/>
            <person name="Okamoto S."/>
            <person name="Suzuki I."/>
            <person name="Tanabe Y."/>
            <person name="Tamaoki M."/>
            <person name="Nakamura Y."/>
            <person name="Kasai F."/>
            <person name="Watanabe A."/>
            <person name="Kawashima K."/>
            <person name="Kishida Y."/>
            <person name="Ono A."/>
            <person name="Shimizu Y."/>
            <person name="Takahashi C."/>
            <person name="Minami C."/>
            <person name="Fujishiro T."/>
            <person name="Kohara M."/>
            <person name="Katoh M."/>
            <person name="Nakazaki N."/>
            <person name="Nakayama S."/>
            <person name="Yamada M."/>
            <person name="Tabata S."/>
            <person name="Watanabe M.M."/>
        </authorList>
    </citation>
    <scope>NUCLEOTIDE SEQUENCE [LARGE SCALE GENOMIC DNA]</scope>
    <source>
        <strain>NIES-843 / IAM M-247</strain>
    </source>
</reference>
<organism>
    <name type="scientific">Microcystis aeruginosa (strain NIES-843 / IAM M-2473)</name>
    <dbReference type="NCBI Taxonomy" id="449447"/>
    <lineage>
        <taxon>Bacteria</taxon>
        <taxon>Bacillati</taxon>
        <taxon>Cyanobacteriota</taxon>
        <taxon>Cyanophyceae</taxon>
        <taxon>Oscillatoriophycideae</taxon>
        <taxon>Chroococcales</taxon>
        <taxon>Microcystaceae</taxon>
        <taxon>Microcystis</taxon>
    </lineage>
</organism>